<evidence type="ECO:0000255" key="1">
    <source>
        <dbReference type="HAMAP-Rule" id="MF_00682"/>
    </source>
</evidence>
<accession>A9AGU6</accession>
<reference key="1">
    <citation type="submission" date="2007-10" db="EMBL/GenBank/DDBJ databases">
        <title>Complete sequence of chromosome 1 of Burkholderia multivorans ATCC 17616.</title>
        <authorList>
            <person name="Copeland A."/>
            <person name="Lucas S."/>
            <person name="Lapidus A."/>
            <person name="Barry K."/>
            <person name="Glavina del Rio T."/>
            <person name="Dalin E."/>
            <person name="Tice H."/>
            <person name="Pitluck S."/>
            <person name="Chain P."/>
            <person name="Malfatti S."/>
            <person name="Shin M."/>
            <person name="Vergez L."/>
            <person name="Schmutz J."/>
            <person name="Larimer F."/>
            <person name="Land M."/>
            <person name="Hauser L."/>
            <person name="Kyrpides N."/>
            <person name="Kim E."/>
            <person name="Tiedje J."/>
            <person name="Richardson P."/>
        </authorList>
    </citation>
    <scope>NUCLEOTIDE SEQUENCE [LARGE SCALE GENOMIC DNA]</scope>
    <source>
        <strain>ATCC 17616 / 249</strain>
    </source>
</reference>
<reference key="2">
    <citation type="submission" date="2007-04" db="EMBL/GenBank/DDBJ databases">
        <title>Complete genome sequence of Burkholderia multivorans ATCC 17616.</title>
        <authorList>
            <person name="Ohtsubo Y."/>
            <person name="Yamashita A."/>
            <person name="Kurokawa K."/>
            <person name="Takami H."/>
            <person name="Yuhara S."/>
            <person name="Nishiyama E."/>
            <person name="Endo R."/>
            <person name="Miyazaki R."/>
            <person name="Ono A."/>
            <person name="Yano K."/>
            <person name="Ito M."/>
            <person name="Sota M."/>
            <person name="Yuji N."/>
            <person name="Hattori M."/>
            <person name="Tsuda M."/>
        </authorList>
    </citation>
    <scope>NUCLEOTIDE SEQUENCE [LARGE SCALE GENOMIC DNA]</scope>
    <source>
        <strain>ATCC 17616 / 249</strain>
    </source>
</reference>
<feature type="chain" id="PRO_1000131728" description="Co-chaperone protein HscB homolog">
    <location>
        <begin position="1"/>
        <end position="175"/>
    </location>
</feature>
<feature type="domain" description="J" evidence="1">
    <location>
        <begin position="7"/>
        <end position="79"/>
    </location>
</feature>
<keyword id="KW-0143">Chaperone</keyword>
<keyword id="KW-1185">Reference proteome</keyword>
<name>HSCB_BURM1</name>
<sequence>MVSLKDSHFDLFHLPAQFALDEAALDAAYRAVQTQVHPDRFAAAGDAQKRIAMQWATRANEAYRTLRDPLKRATYLLSLRGVDIGAENNTAMEPAFLMQQMEWRESIEDAAAARNVDALDALLAELRDEKRARLERLGTLLDSGADQAAAEAVRQLMFIERVASEVGAQIERLET</sequence>
<organism>
    <name type="scientific">Burkholderia multivorans (strain ATCC 17616 / 249)</name>
    <dbReference type="NCBI Taxonomy" id="395019"/>
    <lineage>
        <taxon>Bacteria</taxon>
        <taxon>Pseudomonadati</taxon>
        <taxon>Pseudomonadota</taxon>
        <taxon>Betaproteobacteria</taxon>
        <taxon>Burkholderiales</taxon>
        <taxon>Burkholderiaceae</taxon>
        <taxon>Burkholderia</taxon>
        <taxon>Burkholderia cepacia complex</taxon>
    </lineage>
</organism>
<comment type="function">
    <text evidence="1">Co-chaperone involved in the maturation of iron-sulfur cluster-containing proteins. Seems to help targeting proteins to be folded toward HscA.</text>
</comment>
<comment type="subunit">
    <text evidence="1">Interacts with HscA and stimulates its ATPase activity.</text>
</comment>
<comment type="similarity">
    <text evidence="1">Belongs to the HscB family.</text>
</comment>
<gene>
    <name evidence="1" type="primary">hscB</name>
    <name type="ordered locus">Bmul_1147</name>
    <name type="ordered locus">BMULJ_02107</name>
</gene>
<protein>
    <recommendedName>
        <fullName evidence="1">Co-chaperone protein HscB homolog</fullName>
    </recommendedName>
</protein>
<dbReference type="EMBL" id="CP000868">
    <property type="protein sequence ID" value="ABX14837.1"/>
    <property type="molecule type" value="Genomic_DNA"/>
</dbReference>
<dbReference type="EMBL" id="AP009385">
    <property type="protein sequence ID" value="BAG44014.1"/>
    <property type="molecule type" value="Genomic_DNA"/>
</dbReference>
<dbReference type="RefSeq" id="WP_012213077.1">
    <property type="nucleotide sequence ID" value="NC_010804.1"/>
</dbReference>
<dbReference type="SMR" id="A9AGU6"/>
<dbReference type="STRING" id="395019.BMULJ_02107"/>
<dbReference type="KEGG" id="bmj:BMULJ_02107"/>
<dbReference type="KEGG" id="bmu:Bmul_1147"/>
<dbReference type="eggNOG" id="COG1076">
    <property type="taxonomic scope" value="Bacteria"/>
</dbReference>
<dbReference type="HOGENOM" id="CLU_068529_2_1_4"/>
<dbReference type="Proteomes" id="UP000008815">
    <property type="component" value="Chromosome 1"/>
</dbReference>
<dbReference type="GO" id="GO:1990230">
    <property type="term" value="C:iron-sulfur cluster transfer complex"/>
    <property type="evidence" value="ECO:0007669"/>
    <property type="project" value="TreeGrafter"/>
</dbReference>
<dbReference type="GO" id="GO:0001671">
    <property type="term" value="F:ATPase activator activity"/>
    <property type="evidence" value="ECO:0007669"/>
    <property type="project" value="InterPro"/>
</dbReference>
<dbReference type="GO" id="GO:0051087">
    <property type="term" value="F:protein-folding chaperone binding"/>
    <property type="evidence" value="ECO:0007669"/>
    <property type="project" value="InterPro"/>
</dbReference>
<dbReference type="GO" id="GO:0044571">
    <property type="term" value="P:[2Fe-2S] cluster assembly"/>
    <property type="evidence" value="ECO:0007669"/>
    <property type="project" value="InterPro"/>
</dbReference>
<dbReference type="GO" id="GO:0051259">
    <property type="term" value="P:protein complex oligomerization"/>
    <property type="evidence" value="ECO:0007669"/>
    <property type="project" value="InterPro"/>
</dbReference>
<dbReference type="GO" id="GO:0006457">
    <property type="term" value="P:protein folding"/>
    <property type="evidence" value="ECO:0007669"/>
    <property type="project" value="UniProtKB-UniRule"/>
</dbReference>
<dbReference type="Gene3D" id="1.10.287.110">
    <property type="entry name" value="DnaJ domain"/>
    <property type="match status" value="1"/>
</dbReference>
<dbReference type="Gene3D" id="1.20.1280.20">
    <property type="entry name" value="HscB, C-terminal domain"/>
    <property type="match status" value="1"/>
</dbReference>
<dbReference type="HAMAP" id="MF_00682">
    <property type="entry name" value="HscB"/>
    <property type="match status" value="1"/>
</dbReference>
<dbReference type="InterPro" id="IPR001623">
    <property type="entry name" value="DnaJ_domain"/>
</dbReference>
<dbReference type="InterPro" id="IPR004640">
    <property type="entry name" value="HscB"/>
</dbReference>
<dbReference type="InterPro" id="IPR036386">
    <property type="entry name" value="HscB_C_sf"/>
</dbReference>
<dbReference type="InterPro" id="IPR009073">
    <property type="entry name" value="HscB_oligo_C"/>
</dbReference>
<dbReference type="InterPro" id="IPR036869">
    <property type="entry name" value="J_dom_sf"/>
</dbReference>
<dbReference type="NCBIfam" id="TIGR00714">
    <property type="entry name" value="hscB"/>
    <property type="match status" value="1"/>
</dbReference>
<dbReference type="NCBIfam" id="NF002935">
    <property type="entry name" value="PRK03578.1"/>
    <property type="match status" value="1"/>
</dbReference>
<dbReference type="PANTHER" id="PTHR14021">
    <property type="entry name" value="IRON-SULFUR CLUSTER CO-CHAPERONE PROTEIN HSCB"/>
    <property type="match status" value="1"/>
</dbReference>
<dbReference type="PANTHER" id="PTHR14021:SF15">
    <property type="entry name" value="IRON-SULFUR CLUSTER CO-CHAPERONE PROTEIN HSCB"/>
    <property type="match status" value="1"/>
</dbReference>
<dbReference type="Pfam" id="PF07743">
    <property type="entry name" value="HSCB_C"/>
    <property type="match status" value="1"/>
</dbReference>
<dbReference type="SMART" id="SM00271">
    <property type="entry name" value="DnaJ"/>
    <property type="match status" value="1"/>
</dbReference>
<dbReference type="SUPFAM" id="SSF46565">
    <property type="entry name" value="Chaperone J-domain"/>
    <property type="match status" value="1"/>
</dbReference>
<dbReference type="SUPFAM" id="SSF47144">
    <property type="entry name" value="HSC20 (HSCB), C-terminal oligomerisation domain"/>
    <property type="match status" value="1"/>
</dbReference>
<dbReference type="PROSITE" id="PS50076">
    <property type="entry name" value="DNAJ_2"/>
    <property type="match status" value="1"/>
</dbReference>
<proteinExistence type="inferred from homology"/>